<comment type="similarity">
    <text evidence="1">Belongs to the bacterial ribosomal protein bL34 family.</text>
</comment>
<accession>Q62EM1</accession>
<protein>
    <recommendedName>
        <fullName evidence="1">Large ribosomal subunit protein bL34</fullName>
    </recommendedName>
    <alternativeName>
        <fullName evidence="2">50S ribosomal protein L34</fullName>
    </alternativeName>
</protein>
<sequence>MKRTYQPSVTRRKRTHGFRVRMKTAGGRKVINARRAKGRKRLAI</sequence>
<dbReference type="EMBL" id="CP000010">
    <property type="protein sequence ID" value="AAU50380.1"/>
    <property type="molecule type" value="Genomic_DNA"/>
</dbReference>
<dbReference type="RefSeq" id="WP_004198824.1">
    <property type="nucleotide sequence ID" value="NC_006348.1"/>
</dbReference>
<dbReference type="RefSeq" id="YP_104857.1">
    <property type="nucleotide sequence ID" value="NC_006348.1"/>
</dbReference>
<dbReference type="SMR" id="Q62EM1"/>
<dbReference type="GeneID" id="98107775"/>
<dbReference type="KEGG" id="bma:BMA3400"/>
<dbReference type="PATRIC" id="fig|243160.12.peg.3490"/>
<dbReference type="eggNOG" id="COG0230">
    <property type="taxonomic scope" value="Bacteria"/>
</dbReference>
<dbReference type="HOGENOM" id="CLU_129938_2_0_4"/>
<dbReference type="PRO" id="PR:Q62EM1"/>
<dbReference type="Proteomes" id="UP000006693">
    <property type="component" value="Chromosome 1"/>
</dbReference>
<dbReference type="GO" id="GO:1990904">
    <property type="term" value="C:ribonucleoprotein complex"/>
    <property type="evidence" value="ECO:0007669"/>
    <property type="project" value="UniProtKB-KW"/>
</dbReference>
<dbReference type="GO" id="GO:0005840">
    <property type="term" value="C:ribosome"/>
    <property type="evidence" value="ECO:0007669"/>
    <property type="project" value="UniProtKB-KW"/>
</dbReference>
<dbReference type="GO" id="GO:0003735">
    <property type="term" value="F:structural constituent of ribosome"/>
    <property type="evidence" value="ECO:0007669"/>
    <property type="project" value="InterPro"/>
</dbReference>
<dbReference type="GO" id="GO:0006412">
    <property type="term" value="P:translation"/>
    <property type="evidence" value="ECO:0007669"/>
    <property type="project" value="UniProtKB-UniRule"/>
</dbReference>
<dbReference type="FunFam" id="1.10.287.3980:FF:000001">
    <property type="entry name" value="Mitochondrial ribosomal protein L34"/>
    <property type="match status" value="1"/>
</dbReference>
<dbReference type="Gene3D" id="1.10.287.3980">
    <property type="match status" value="1"/>
</dbReference>
<dbReference type="HAMAP" id="MF_00391">
    <property type="entry name" value="Ribosomal_bL34"/>
    <property type="match status" value="1"/>
</dbReference>
<dbReference type="InterPro" id="IPR000271">
    <property type="entry name" value="Ribosomal_bL34"/>
</dbReference>
<dbReference type="InterPro" id="IPR020939">
    <property type="entry name" value="Ribosomal_bL34_CS"/>
</dbReference>
<dbReference type="NCBIfam" id="TIGR01030">
    <property type="entry name" value="rpmH_bact"/>
    <property type="match status" value="1"/>
</dbReference>
<dbReference type="PANTHER" id="PTHR14503:SF4">
    <property type="entry name" value="LARGE RIBOSOMAL SUBUNIT PROTEIN BL34M"/>
    <property type="match status" value="1"/>
</dbReference>
<dbReference type="PANTHER" id="PTHR14503">
    <property type="entry name" value="MITOCHONDRIAL RIBOSOMAL PROTEIN 34 FAMILY MEMBER"/>
    <property type="match status" value="1"/>
</dbReference>
<dbReference type="Pfam" id="PF00468">
    <property type="entry name" value="Ribosomal_L34"/>
    <property type="match status" value="1"/>
</dbReference>
<dbReference type="PROSITE" id="PS00784">
    <property type="entry name" value="RIBOSOMAL_L34"/>
    <property type="match status" value="1"/>
</dbReference>
<gene>
    <name evidence="1" type="primary">rpmH</name>
    <name type="ordered locus">BMA3400</name>
</gene>
<reference key="1">
    <citation type="journal article" date="2004" name="Proc. Natl. Acad. Sci. U.S.A.">
        <title>Structural flexibility in the Burkholderia mallei genome.</title>
        <authorList>
            <person name="Nierman W.C."/>
            <person name="DeShazer D."/>
            <person name="Kim H.S."/>
            <person name="Tettelin H."/>
            <person name="Nelson K.E."/>
            <person name="Feldblyum T.V."/>
            <person name="Ulrich R.L."/>
            <person name="Ronning C.M."/>
            <person name="Brinkac L.M."/>
            <person name="Daugherty S.C."/>
            <person name="Davidsen T.D."/>
            <person name="DeBoy R.T."/>
            <person name="Dimitrov G."/>
            <person name="Dodson R.J."/>
            <person name="Durkin A.S."/>
            <person name="Gwinn M.L."/>
            <person name="Haft D.H."/>
            <person name="Khouri H.M."/>
            <person name="Kolonay J.F."/>
            <person name="Madupu R."/>
            <person name="Mohammoud Y."/>
            <person name="Nelson W.C."/>
            <person name="Radune D."/>
            <person name="Romero C.M."/>
            <person name="Sarria S."/>
            <person name="Selengut J."/>
            <person name="Shamblin C."/>
            <person name="Sullivan S.A."/>
            <person name="White O."/>
            <person name="Yu Y."/>
            <person name="Zafar N."/>
            <person name="Zhou L."/>
            <person name="Fraser C.M."/>
        </authorList>
    </citation>
    <scope>NUCLEOTIDE SEQUENCE [LARGE SCALE GENOMIC DNA]</scope>
    <source>
        <strain>ATCC 23344</strain>
    </source>
</reference>
<keyword id="KW-1185">Reference proteome</keyword>
<keyword id="KW-0687">Ribonucleoprotein</keyword>
<keyword id="KW-0689">Ribosomal protein</keyword>
<organism>
    <name type="scientific">Burkholderia mallei (strain ATCC 23344)</name>
    <dbReference type="NCBI Taxonomy" id="243160"/>
    <lineage>
        <taxon>Bacteria</taxon>
        <taxon>Pseudomonadati</taxon>
        <taxon>Pseudomonadota</taxon>
        <taxon>Betaproteobacteria</taxon>
        <taxon>Burkholderiales</taxon>
        <taxon>Burkholderiaceae</taxon>
        <taxon>Burkholderia</taxon>
        <taxon>pseudomallei group</taxon>
    </lineage>
</organism>
<name>RL34_BURMA</name>
<evidence type="ECO:0000255" key="1">
    <source>
        <dbReference type="HAMAP-Rule" id="MF_00391"/>
    </source>
</evidence>
<evidence type="ECO:0000305" key="2"/>
<feature type="chain" id="PRO_0000187358" description="Large ribosomal subunit protein bL34">
    <location>
        <begin position="1"/>
        <end position="44"/>
    </location>
</feature>
<proteinExistence type="inferred from homology"/>